<evidence type="ECO:0000250" key="1"/>
<evidence type="ECO:0000305" key="2"/>
<reference key="1">
    <citation type="journal article" date="1995" name="Science">
        <title>Whole-genome random sequencing and assembly of Haemophilus influenzae Rd.</title>
        <authorList>
            <person name="Fleischmann R.D."/>
            <person name="Adams M.D."/>
            <person name="White O."/>
            <person name="Clayton R.A."/>
            <person name="Kirkness E.F."/>
            <person name="Kerlavage A.R."/>
            <person name="Bult C.J."/>
            <person name="Tomb J.-F."/>
            <person name="Dougherty B.A."/>
            <person name="Merrick J.M."/>
            <person name="McKenney K."/>
            <person name="Sutton G.G."/>
            <person name="FitzHugh W."/>
            <person name="Fields C.A."/>
            <person name="Gocayne J.D."/>
            <person name="Scott J.D."/>
            <person name="Shirley R."/>
            <person name="Liu L.-I."/>
            <person name="Glodek A."/>
            <person name="Kelley J.M."/>
            <person name="Weidman J.F."/>
            <person name="Phillips C.A."/>
            <person name="Spriggs T."/>
            <person name="Hedblom E."/>
            <person name="Cotton M.D."/>
            <person name="Utterback T.R."/>
            <person name="Hanna M.C."/>
            <person name="Nguyen D.T."/>
            <person name="Saudek D.M."/>
            <person name="Brandon R.C."/>
            <person name="Fine L.D."/>
            <person name="Fritchman J.L."/>
            <person name="Fuhrmann J.L."/>
            <person name="Geoghagen N.S.M."/>
            <person name="Gnehm C.L."/>
            <person name="McDonald L.A."/>
            <person name="Small K.V."/>
            <person name="Fraser C.M."/>
            <person name="Smith H.O."/>
            <person name="Venter J.C."/>
        </authorList>
    </citation>
    <scope>NUCLEOTIDE SEQUENCE [LARGE SCALE GENOMIC DNA]</scope>
    <source>
        <strain>ATCC 51907 / DSM 11121 / KW20 / Rd</strain>
    </source>
</reference>
<protein>
    <recommendedName>
        <fullName>D-xylose-binding periplasmic protein</fullName>
    </recommendedName>
</protein>
<name>XYLF_HAEIN</name>
<accession>P45047</accession>
<keyword id="KW-0574">Periplasm</keyword>
<keyword id="KW-1185">Reference proteome</keyword>
<keyword id="KW-0732">Signal</keyword>
<keyword id="KW-0762">Sugar transport</keyword>
<keyword id="KW-0813">Transport</keyword>
<sequence>MKIKSALLTLVGALTVFSSSAHSKDLKIGLSIDDLRLERWQKDRDIFVNKAESMGAKVFVQSANGDDSAQISQIENMINKNIDVLVIIPHNGEVLSNVISEAKKEGIKVLAYDRLINNADLDFYVSFDNEKVGELQAKSIVAVKPEGNYFLMGGSPVDNNAKLFRKGQMKVLDPLIASGKIKVVGDQWVDSWLAEKALQIMENALTANKNNVDAVVASNDATAGGAIQALSAQGLSGKVAISGQDADLAAIKRIVNGSQTMTVYKPITKLADKAAEIAVELGKNEKIEANAELNNGLKNVPAYLLDPIAVDKRNINETVIKDGFHTKESIYH</sequence>
<feature type="signal peptide" evidence="1">
    <location>
        <begin position="1"/>
        <end position="23"/>
    </location>
</feature>
<feature type="chain" id="PRO_0000031739" description="D-xylose-binding periplasmic protein">
    <location>
        <begin position="24"/>
        <end position="332"/>
    </location>
</feature>
<gene>
    <name type="primary">xylF</name>
    <name type="ordered locus">HI_1111</name>
</gene>
<proteinExistence type="inferred from homology"/>
<organism>
    <name type="scientific">Haemophilus influenzae (strain ATCC 51907 / DSM 11121 / KW20 / Rd)</name>
    <dbReference type="NCBI Taxonomy" id="71421"/>
    <lineage>
        <taxon>Bacteria</taxon>
        <taxon>Pseudomonadati</taxon>
        <taxon>Pseudomonadota</taxon>
        <taxon>Gammaproteobacteria</taxon>
        <taxon>Pasteurellales</taxon>
        <taxon>Pasteurellaceae</taxon>
        <taxon>Haemophilus</taxon>
    </lineage>
</organism>
<comment type="function">
    <text evidence="1">Involved in the high-affinity D-xylose membrane transport system. Binds with high affinity to xylose (By similarity).</text>
</comment>
<comment type="subcellular location">
    <subcellularLocation>
        <location evidence="1">Periplasm</location>
    </subcellularLocation>
</comment>
<comment type="similarity">
    <text evidence="2">Belongs to the bacterial solute-binding protein 2 family.</text>
</comment>
<dbReference type="EMBL" id="L42023">
    <property type="protein sequence ID" value="AAC22765.1"/>
    <property type="molecule type" value="Genomic_DNA"/>
</dbReference>
<dbReference type="PIR" id="C64183">
    <property type="entry name" value="C64183"/>
</dbReference>
<dbReference type="RefSeq" id="NP_439268.1">
    <property type="nucleotide sequence ID" value="NC_000907.1"/>
</dbReference>
<dbReference type="SMR" id="P45047"/>
<dbReference type="STRING" id="71421.HI_1111"/>
<dbReference type="EnsemblBacteria" id="AAC22765">
    <property type="protein sequence ID" value="AAC22765"/>
    <property type="gene ID" value="HI_1111"/>
</dbReference>
<dbReference type="KEGG" id="hin:HI_1111"/>
<dbReference type="PATRIC" id="fig|71421.8.peg.1160"/>
<dbReference type="eggNOG" id="COG4213">
    <property type="taxonomic scope" value="Bacteria"/>
</dbReference>
<dbReference type="HOGENOM" id="CLU_037628_13_0_6"/>
<dbReference type="OrthoDB" id="9773673at2"/>
<dbReference type="PhylomeDB" id="P45047"/>
<dbReference type="BioCyc" id="HINF71421:G1GJ1-1146-MONOMER"/>
<dbReference type="Proteomes" id="UP000000579">
    <property type="component" value="Chromosome"/>
</dbReference>
<dbReference type="GO" id="GO:0030288">
    <property type="term" value="C:outer membrane-bounded periplasmic space"/>
    <property type="evidence" value="ECO:0000318"/>
    <property type="project" value="GO_Central"/>
</dbReference>
<dbReference type="GO" id="GO:0030246">
    <property type="term" value="F:carbohydrate binding"/>
    <property type="evidence" value="ECO:0000318"/>
    <property type="project" value="GO_Central"/>
</dbReference>
<dbReference type="GO" id="GO:0048029">
    <property type="term" value="F:monosaccharide binding"/>
    <property type="evidence" value="ECO:0007669"/>
    <property type="project" value="InterPro"/>
</dbReference>
<dbReference type="GO" id="GO:0015753">
    <property type="term" value="P:D-xylose transmembrane transport"/>
    <property type="evidence" value="ECO:0007669"/>
    <property type="project" value="InterPro"/>
</dbReference>
<dbReference type="CDD" id="cd19991">
    <property type="entry name" value="PBP1_ABC_xylose_binding"/>
    <property type="match status" value="1"/>
</dbReference>
<dbReference type="FunFam" id="3.40.50.2300:FF:000078">
    <property type="entry name" value="D-xylose ABC transporter substrate-binding protein"/>
    <property type="match status" value="1"/>
</dbReference>
<dbReference type="Gene3D" id="3.40.50.2300">
    <property type="match status" value="2"/>
</dbReference>
<dbReference type="InterPro" id="IPR050555">
    <property type="entry name" value="Bact_Solute-Bind_Prot2"/>
</dbReference>
<dbReference type="InterPro" id="IPR028082">
    <property type="entry name" value="Peripla_BP_I"/>
</dbReference>
<dbReference type="InterPro" id="IPR025997">
    <property type="entry name" value="SBP_2_dom"/>
</dbReference>
<dbReference type="InterPro" id="IPR013456">
    <property type="entry name" value="XylF"/>
</dbReference>
<dbReference type="NCBIfam" id="NF007680">
    <property type="entry name" value="PRK10355.1"/>
    <property type="match status" value="1"/>
</dbReference>
<dbReference type="NCBIfam" id="TIGR02634">
    <property type="entry name" value="xylF"/>
    <property type="match status" value="1"/>
</dbReference>
<dbReference type="PANTHER" id="PTHR30036">
    <property type="entry name" value="D-XYLOSE-BINDING PERIPLASMIC PROTEIN"/>
    <property type="match status" value="1"/>
</dbReference>
<dbReference type="PANTHER" id="PTHR30036:SF1">
    <property type="entry name" value="D-XYLOSE-BINDING PERIPLASMIC PROTEIN"/>
    <property type="match status" value="1"/>
</dbReference>
<dbReference type="Pfam" id="PF13407">
    <property type="entry name" value="Peripla_BP_4"/>
    <property type="match status" value="1"/>
</dbReference>
<dbReference type="SUPFAM" id="SSF53822">
    <property type="entry name" value="Periplasmic binding protein-like I"/>
    <property type="match status" value="1"/>
</dbReference>